<gene>
    <name evidence="1" type="primary">Mat89Ba</name>
    <name type="ORF">GM15447</name>
</gene>
<proteinExistence type="inferred from homology"/>
<keyword id="KW-0158">Chromosome</keyword>
<keyword id="KW-0539">Nucleus</keyword>
<keyword id="KW-1185">Reference proteome</keyword>
<keyword id="KW-0694">RNA-binding</keyword>
<dbReference type="EMBL" id="CH480827">
    <property type="protein sequence ID" value="EDW44891.1"/>
    <property type="molecule type" value="Genomic_DNA"/>
</dbReference>
<dbReference type="RefSeq" id="XP_002041243.1">
    <property type="nucleotide sequence ID" value="XM_002041207.1"/>
</dbReference>
<dbReference type="SMR" id="B4IBY3"/>
<dbReference type="STRING" id="7238.B4IBY3"/>
<dbReference type="EnsemblMetazoa" id="FBtr0198432">
    <property type="protein sequence ID" value="FBpp0196924"/>
    <property type="gene ID" value="FBgn0170365"/>
</dbReference>
<dbReference type="EnsemblMetazoa" id="XM_002041207.2">
    <property type="protein sequence ID" value="XP_002041243.2"/>
    <property type="gene ID" value="LOC6616913"/>
</dbReference>
<dbReference type="GeneID" id="6616913"/>
<dbReference type="KEGG" id="dse:6616913"/>
<dbReference type="CTD" id="41973"/>
<dbReference type="HOGENOM" id="CLU_003502_0_1_1"/>
<dbReference type="OMA" id="NPHGGKE"/>
<dbReference type="PhylomeDB" id="B4IBY3"/>
<dbReference type="Proteomes" id="UP000001292">
    <property type="component" value="Unassembled WGS sequence"/>
</dbReference>
<dbReference type="GO" id="GO:0000794">
    <property type="term" value="C:condensed nuclear chromosome"/>
    <property type="evidence" value="ECO:0000250"/>
    <property type="project" value="UniProtKB"/>
</dbReference>
<dbReference type="GO" id="GO:0032545">
    <property type="term" value="C:CURI complex"/>
    <property type="evidence" value="ECO:0007669"/>
    <property type="project" value="TreeGrafter"/>
</dbReference>
<dbReference type="GO" id="GO:0032040">
    <property type="term" value="C:small-subunit processome"/>
    <property type="evidence" value="ECO:0000250"/>
    <property type="project" value="UniProtKB"/>
</dbReference>
<dbReference type="GO" id="GO:0034456">
    <property type="term" value="C:UTP-C complex"/>
    <property type="evidence" value="ECO:0007669"/>
    <property type="project" value="TreeGrafter"/>
</dbReference>
<dbReference type="GO" id="GO:0003723">
    <property type="term" value="F:RNA binding"/>
    <property type="evidence" value="ECO:0007669"/>
    <property type="project" value="UniProtKB-KW"/>
</dbReference>
<dbReference type="GO" id="GO:0042274">
    <property type="term" value="P:ribosomal small subunit biogenesis"/>
    <property type="evidence" value="ECO:0000250"/>
    <property type="project" value="UniProtKB"/>
</dbReference>
<dbReference type="GO" id="GO:0006364">
    <property type="term" value="P:rRNA processing"/>
    <property type="evidence" value="ECO:0007669"/>
    <property type="project" value="TreeGrafter"/>
</dbReference>
<dbReference type="GO" id="GO:0006409">
    <property type="term" value="P:tRNA export from nucleus"/>
    <property type="evidence" value="ECO:0007669"/>
    <property type="project" value="TreeGrafter"/>
</dbReference>
<dbReference type="FunFam" id="1.10.1410.10:FF:000005">
    <property type="entry name" value="Nucleolar protein 6"/>
    <property type="match status" value="1"/>
</dbReference>
<dbReference type="FunFam" id="1.10.1410.10:FF:000006">
    <property type="entry name" value="Nucleolar protein 6"/>
    <property type="match status" value="1"/>
</dbReference>
<dbReference type="Gene3D" id="1.10.1410.10">
    <property type="match status" value="2"/>
</dbReference>
<dbReference type="Gene3D" id="3.30.70.3030">
    <property type="match status" value="1"/>
</dbReference>
<dbReference type="InterPro" id="IPR005554">
    <property type="entry name" value="NOL6/Upt22"/>
</dbReference>
<dbReference type="InterPro" id="IPR035082">
    <property type="entry name" value="Nrap_D1"/>
</dbReference>
<dbReference type="InterPro" id="IPR035367">
    <property type="entry name" value="Nrap_D2"/>
</dbReference>
<dbReference type="InterPro" id="IPR035368">
    <property type="entry name" value="Nrap_D3"/>
</dbReference>
<dbReference type="InterPro" id="IPR035369">
    <property type="entry name" value="Nrap_D4"/>
</dbReference>
<dbReference type="InterPro" id="IPR035370">
    <property type="entry name" value="Nrap_D5"/>
</dbReference>
<dbReference type="InterPro" id="IPR035371">
    <property type="entry name" value="Nrap_D6"/>
</dbReference>
<dbReference type="PANTHER" id="PTHR17972:SF0">
    <property type="entry name" value="NUCLEOLAR PROTEIN 6"/>
    <property type="match status" value="1"/>
</dbReference>
<dbReference type="PANTHER" id="PTHR17972">
    <property type="entry name" value="NUCLEOLAR RNA-ASSOCIATED PROTEIN"/>
    <property type="match status" value="1"/>
</dbReference>
<dbReference type="Pfam" id="PF03813">
    <property type="entry name" value="Nrap"/>
    <property type="match status" value="1"/>
</dbReference>
<dbReference type="Pfam" id="PF17403">
    <property type="entry name" value="Nrap_D2"/>
    <property type="match status" value="1"/>
</dbReference>
<dbReference type="Pfam" id="PF17404">
    <property type="entry name" value="Nrap_D3"/>
    <property type="match status" value="1"/>
</dbReference>
<dbReference type="Pfam" id="PF17405">
    <property type="entry name" value="Nrap_D4"/>
    <property type="match status" value="1"/>
</dbReference>
<dbReference type="Pfam" id="PF17406">
    <property type="entry name" value="Nrap_D5"/>
    <property type="match status" value="1"/>
</dbReference>
<dbReference type="Pfam" id="PF17407">
    <property type="entry name" value="Nrap_D6"/>
    <property type="match status" value="1"/>
</dbReference>
<reference evidence="6" key="1">
    <citation type="journal article" date="2007" name="Nature">
        <title>Evolution of genes and genomes on the Drosophila phylogeny.</title>
        <authorList>
            <consortium name="Drosophila 12 genomes consortium"/>
        </authorList>
    </citation>
    <scope>NUCLEOTIDE SEQUENCE [LARGE SCALE GENOMIC DNA]</scope>
    <source>
        <strain evidence="6">Rob3c / Tucson 14021-0248.25</strain>
    </source>
</reference>
<name>NOL6_DROSE</name>
<organism>
    <name type="scientific">Drosophila sechellia</name>
    <name type="common">Fruit fly</name>
    <dbReference type="NCBI Taxonomy" id="7238"/>
    <lineage>
        <taxon>Eukaryota</taxon>
        <taxon>Metazoa</taxon>
        <taxon>Ecdysozoa</taxon>
        <taxon>Arthropoda</taxon>
        <taxon>Hexapoda</taxon>
        <taxon>Insecta</taxon>
        <taxon>Pterygota</taxon>
        <taxon>Neoptera</taxon>
        <taxon>Endopterygota</taxon>
        <taxon>Diptera</taxon>
        <taxon>Brachycera</taxon>
        <taxon>Muscomorpha</taxon>
        <taxon>Ephydroidea</taxon>
        <taxon>Drosophilidae</taxon>
        <taxon>Drosophila</taxon>
        <taxon>Sophophora</taxon>
    </lineage>
</organism>
<protein>
    <recommendedName>
        <fullName evidence="3">Nucleolar protein 6</fullName>
    </recommendedName>
    <alternativeName>
        <fullName evidence="1">Maternal transcript 89Ba</fullName>
    </alternativeName>
</protein>
<comment type="function">
    <text evidence="3">Part of the small subunit (SSU) processome, first precursor of the small eukaryotic ribosomal subunit. During the assembly of the SSU processome in the nucleolus, many ribosome biogenesis factors, an RNA chaperone and ribosomal proteins associate with the nascent pre-rRNA and work in concert to generate RNA folding, modifications, rearrangements and cleavage as well as targeted degradation of pre-ribosomal RNA by the RNA exosome.</text>
</comment>
<comment type="subunit">
    <text evidence="3">Part of the small subunit (SSU) processome, composed of more than 70 proteins and the RNA chaperone small nucleolar RNA (snoRNA) U3.</text>
</comment>
<comment type="subcellular location">
    <subcellularLocation>
        <location evidence="3">Nucleus</location>
        <location evidence="3">Nucleolus</location>
    </subcellularLocation>
    <subcellularLocation>
        <location evidence="2">Chromosome</location>
    </subcellularLocation>
    <text evidence="2">Localizes to condensed chromosomes in mitosis.</text>
</comment>
<comment type="similarity">
    <text evidence="4">Belongs to the NRAP family.</text>
</comment>
<accession>B4IBY3</accession>
<feature type="chain" id="PRO_0000383628" description="Nucleolar protein 6">
    <location>
        <begin position="1"/>
        <end position="1196"/>
    </location>
</feature>
<feature type="region of interest" description="Disordered" evidence="5">
    <location>
        <begin position="1"/>
        <end position="75"/>
    </location>
</feature>
<feature type="region of interest" description="Disordered" evidence="5">
    <location>
        <begin position="1140"/>
        <end position="1196"/>
    </location>
</feature>
<feature type="compositionally biased region" description="Basic and acidic residues" evidence="5">
    <location>
        <begin position="22"/>
        <end position="31"/>
    </location>
</feature>
<feature type="compositionally biased region" description="Basic residues" evidence="5">
    <location>
        <begin position="1165"/>
        <end position="1174"/>
    </location>
</feature>
<sequence length="1196" mass="136668">MPGKLVGSSEEAARTGTQANAHAEDHSDLEHSAPSTDDGFDEPKPPIAKSVPPSTAIPKKNNFKQRGNTKNVKPPTLEEMKELRDTQNLFHSNLFKLQVKEMLEELQLKQKYTDFIENWLESFTVFTRQLKDGLMERTHLEVPMKLSEKPTGFVFSKPTREPYLIGAAATGTLLGPKIVVDVALEMPKESLHKEDYLNLRYDQKRALYLTYVTERMMESPDYAQDQFNFNYYANNPLKPVLELIPVTKQVNKHLQVRLFITAPLSSFKPGRFVPWNNNIRPSFYGDEWDEQDPLPSTQHYNANVLFDLTLSENQAQLDKAFKSRRNFQDGLLLLKVWLRQRQLDIGYSGFGAHILAAFIVYLNKQRILHQSSSSYQVARTVWNQLANTDWTKGISLAVDPIQTEELNKFAEHYDVCFIDFTGQHNLCANIPLYLYKRVREEAKLAVELLNDMKLNSFPLIFMQKCPLYSRVDNILKISNYSCINQMLTLHSQPRIKYDFANYGYPQLLHLLTELLKKGLAERVHSILPLETATAAWPVENKAPVIGKYIQLGLILQPEHAYEVLNKGPAANDDLAGAEEFRRFWGEKSNLRRFQDGSITEAVVWGTAQDSPAKKRLIVRHVVLHLLEHHLQLDSKEVQYIGGELDQVYKLSPWFKVNKLKTKLSLDQDTDAEALSPHVIRCYDELARQLHGLNDLPLEIVSISGVSPIFRYCEPQPVLPQALLVENRILASTIQRVVIQLGQSGKWPTELGALRALKTAFLIEIGEKLEAQCRLHWVISADGLLVLKQGYCFLIELAHNKELALLKQEVTERGITTYVDNAASRFLERQHYILPKVSGALHSLHQTYSAFGSTVLLAKRWLATQLLDDGLWPDMATELLVAHLFQQRYAPQSIAAPQTGFIRFLQLLSHSDFNGELFLLNFNNSWQEQQIADLEHNYRSNRQSYPPLAVATSYDMQHAGRLWTSDQSPSQRVLGHVTRLARRALEIIETSLMSKDLRFVRPAQLFRASNEGYDLVIQFKPDLVPNSLSYDLGSPFVSFSQPNFSLPRAGSDYIARIVGLLRSAYSDFAAFFYNPHGGKELAIVWRPTTEFAAKPFKVTELQACRPCGNGKVQVLKETLLEDFKLLLKDFYLRIATPEELKREQREHQKPMRYFEANQAVEESKPKPKKHRKRKGTGKEAPPKKKRLIKSSTLKALK</sequence>
<evidence type="ECO:0000250" key="1">
    <source>
        <dbReference type="UniProtKB" id="Q8IH00"/>
    </source>
</evidence>
<evidence type="ECO:0000250" key="2">
    <source>
        <dbReference type="UniProtKB" id="Q8R5K4"/>
    </source>
</evidence>
<evidence type="ECO:0000250" key="3">
    <source>
        <dbReference type="UniProtKB" id="Q9H6R4"/>
    </source>
</evidence>
<evidence type="ECO:0000255" key="4"/>
<evidence type="ECO:0000256" key="5">
    <source>
        <dbReference type="SAM" id="MobiDB-lite"/>
    </source>
</evidence>
<evidence type="ECO:0000312" key="6">
    <source>
        <dbReference type="EMBL" id="EDW44891.1"/>
    </source>
</evidence>